<feature type="chain" id="PRO_0000436365" description="Indole prenyltransferase tdiB">
    <location>
        <begin position="1"/>
        <end position="419"/>
    </location>
</feature>
<feature type="binding site" evidence="1">
    <location>
        <begin position="58"/>
        <end position="59"/>
    </location>
    <ligand>
        <name>L-tryptophan</name>
        <dbReference type="ChEBI" id="CHEBI:57912"/>
    </ligand>
</feature>
<feature type="binding site" evidence="1">
    <location>
        <position position="81"/>
    </location>
    <ligand>
        <name>substrate</name>
    </ligand>
</feature>
<feature type="binding site" evidence="1">
    <location>
        <position position="165"/>
    </location>
    <ligand>
        <name>substrate</name>
    </ligand>
</feature>
<feature type="binding site" evidence="1">
    <location>
        <position position="167"/>
    </location>
    <ligand>
        <name>substrate</name>
    </ligand>
</feature>
<feature type="binding site" evidence="1">
    <location>
        <position position="236"/>
    </location>
    <ligand>
        <name>substrate</name>
    </ligand>
</feature>
<feature type="binding site" evidence="1">
    <location>
        <position position="238"/>
    </location>
    <ligand>
        <name>substrate</name>
    </ligand>
</feature>
<feature type="binding site" evidence="1">
    <location>
        <position position="240"/>
    </location>
    <ligand>
        <name>substrate</name>
    </ligand>
</feature>
<feature type="binding site" evidence="1">
    <location>
        <position position="330"/>
    </location>
    <ligand>
        <name>substrate</name>
    </ligand>
</feature>
<feature type="binding site" evidence="1">
    <location>
        <position position="394"/>
    </location>
    <ligand>
        <name>substrate</name>
    </ligand>
</feature>
<evidence type="ECO:0000250" key="1">
    <source>
        <dbReference type="UniProtKB" id="Q50EL0"/>
    </source>
</evidence>
<evidence type="ECO:0000269" key="2">
    <source>
    </source>
</evidence>
<evidence type="ECO:0000269" key="3">
    <source>
    </source>
</evidence>
<evidence type="ECO:0000269" key="4">
    <source>
    </source>
</evidence>
<evidence type="ECO:0000269" key="5">
    <source>
    </source>
</evidence>
<evidence type="ECO:0000269" key="6">
    <source>
    </source>
</evidence>
<evidence type="ECO:0000269" key="7">
    <source>
    </source>
</evidence>
<evidence type="ECO:0000269" key="8">
    <source>
    </source>
</evidence>
<evidence type="ECO:0000269" key="9">
    <source>
    </source>
</evidence>
<evidence type="ECO:0000303" key="10">
    <source>
    </source>
</evidence>
<evidence type="ECO:0000303" key="11">
    <source>
    </source>
</evidence>
<evidence type="ECO:0000305" key="12"/>
<accession>A7XRY3</accession>
<accession>C8VEN3</accession>
<accession>Q5AT66</accession>
<protein>
    <recommendedName>
        <fullName evidence="11">Indole prenyltransferase tdiB</fullName>
        <ecNumber evidence="5">2.5.1.-</ecNumber>
    </recommendedName>
    <alternativeName>
        <fullName evidence="10">Terrequinone biosynthesis protein B</fullName>
    </alternativeName>
</protein>
<dbReference type="EC" id="2.5.1.-" evidence="5"/>
<dbReference type="EMBL" id="EF550582">
    <property type="protein sequence ID" value="ABU51603.1"/>
    <property type="molecule type" value="mRNA"/>
</dbReference>
<dbReference type="EMBL" id="BN001305">
    <property type="protein sequence ID" value="CBF80712.1"/>
    <property type="molecule type" value="Genomic_DNA"/>
</dbReference>
<dbReference type="EMBL" id="AACD01000154">
    <property type="protein sequence ID" value="EAA66858.1"/>
    <property type="molecule type" value="Genomic_DNA"/>
</dbReference>
<dbReference type="RefSeq" id="XP_681783.1">
    <property type="nucleotide sequence ID" value="XM_676691.1"/>
</dbReference>
<dbReference type="SMR" id="A7XRY3"/>
<dbReference type="STRING" id="227321.A7XRY3"/>
<dbReference type="EnsemblFungi" id="CBF80712">
    <property type="protein sequence ID" value="CBF80712"/>
    <property type="gene ID" value="ANIA_08514"/>
</dbReference>
<dbReference type="KEGG" id="ani:ANIA_08514"/>
<dbReference type="VEuPathDB" id="FungiDB:AN8514"/>
<dbReference type="eggNOG" id="ENOG502S2XP">
    <property type="taxonomic scope" value="Eukaryota"/>
</dbReference>
<dbReference type="InParanoid" id="A7XRY3"/>
<dbReference type="OMA" id="YVPLWQY"/>
<dbReference type="OrthoDB" id="5392033at2759"/>
<dbReference type="BioCyc" id="MetaCyc:MONOMER-18728"/>
<dbReference type="Proteomes" id="UP000000560">
    <property type="component" value="Chromosome V"/>
</dbReference>
<dbReference type="GO" id="GO:0004659">
    <property type="term" value="F:prenyltransferase activity"/>
    <property type="evidence" value="ECO:0000314"/>
    <property type="project" value="AspGD"/>
</dbReference>
<dbReference type="GO" id="GO:0044550">
    <property type="term" value="P:secondary metabolite biosynthetic process"/>
    <property type="evidence" value="ECO:0000314"/>
    <property type="project" value="AspGD"/>
</dbReference>
<dbReference type="GO" id="GO:0045461">
    <property type="term" value="P:sterigmatocystin biosynthetic process"/>
    <property type="evidence" value="ECO:0000315"/>
    <property type="project" value="AspGD"/>
</dbReference>
<dbReference type="GO" id="GO:1900796">
    <property type="term" value="P:terrequinone A biosynthetic process"/>
    <property type="evidence" value="ECO:0000314"/>
    <property type="project" value="AspGD"/>
</dbReference>
<dbReference type="CDD" id="cd13929">
    <property type="entry name" value="PT-DMATS_CymD"/>
    <property type="match status" value="1"/>
</dbReference>
<dbReference type="InterPro" id="IPR033964">
    <property type="entry name" value="Aro_prenylTrfase"/>
</dbReference>
<dbReference type="InterPro" id="IPR017795">
    <property type="entry name" value="Aro_prenylTrfase_DMATS"/>
</dbReference>
<dbReference type="NCBIfam" id="TIGR03429">
    <property type="entry name" value="arom_pren_DMATS"/>
    <property type="match status" value="1"/>
</dbReference>
<dbReference type="PANTHER" id="PTHR40627:SF5">
    <property type="entry name" value="INDOLE PRENYLTRANSFERASE TDIB"/>
    <property type="match status" value="1"/>
</dbReference>
<dbReference type="PANTHER" id="PTHR40627">
    <property type="entry name" value="INDOLE PRENYLTRANSFERASE TDIB-RELATED"/>
    <property type="match status" value="1"/>
</dbReference>
<dbReference type="Pfam" id="PF11991">
    <property type="entry name" value="Trp_DMAT"/>
    <property type="match status" value="1"/>
</dbReference>
<dbReference type="SFLD" id="SFLDS00036">
    <property type="entry name" value="Aromatic_Prenyltransferase"/>
    <property type="match status" value="1"/>
</dbReference>
<dbReference type="SFLD" id="SFLDG01162">
    <property type="entry name" value="I"/>
    <property type="match status" value="1"/>
</dbReference>
<comment type="function">
    <text evidence="2 3 4 5 7">Indole prenyltransferase; part of the gene cluster that mediates the biosynthesis of terrequinone A, an antitumor agent (PubMed:16426969, PubMed:17291795, PubMed:17704773, PubMed:22083274). The first step in the biosynthetic pathway for terrequinone A is formation of indole pyruvic acid (IPA) from L-tryptophan by the aminotransferase tdiD (PubMed:17704773). The nonribosomal peptide synthase tdiA then immediately converts unstable IPA to didemethylasterriquinone D (DDAQ D), via condensation of 2 IPA molecules (PubMed:17704773). The symmetric connectivity of the 2 IPA molecules is thought to arise by head-to-tail dual Claisen condensations facilitated by the TE domain (PubMed:17704773). TdiB then catalyzes reverse prenylation by transferring dimethylallyl diphosphate to carbon atom 2' of DDAQ D, to yield asterriquinone C-1 (PubMed:18029206). Finally, tdiC and tdiE enzymes robustly convert asterriquinone C-1 to terrequinone A via a transformation involving regular prenylation at carbon atom 5, which requires elimination of the hydroxy group on C-5 (PubMed:17704773, PubMed:18029206).</text>
</comment>
<comment type="catalytic activity">
    <reaction evidence="5">
        <text>didemethylasterriquinone D + dimethylallyl diphosphate = asterriquinone C1 + diphosphate</text>
        <dbReference type="Rhea" id="RHEA:72979"/>
        <dbReference type="ChEBI" id="CHEBI:33019"/>
        <dbReference type="ChEBI" id="CHEBI:57623"/>
        <dbReference type="ChEBI" id="CHEBI:192553"/>
        <dbReference type="ChEBI" id="CHEBI:192557"/>
    </reaction>
    <physiologicalReaction direction="left-to-right" evidence="5">
        <dbReference type="Rhea" id="RHEA:72980"/>
    </physiologicalReaction>
</comment>
<comment type="biophysicochemical properties">
    <kinetics>
        <KM evidence="5">73.8 uM for didemethylasterriquinone D (DDAQ D)</KM>
        <KM evidence="5">19.88 uM for dimethylallyl diphosphate (DMAPP)</KM>
    </kinetics>
</comment>
<comment type="pathway">
    <text evidence="3 4">Secondary metabolite biosynthesis.</text>
</comment>
<comment type="induction">
    <text evidence="2 3 6 8 9">Specifically expressed at both asexual stages (PubMed:26773375). Expression is positively regulated by the secondary metabolism regulator laeA (PubMed:16426969, PubMed:17291795). Expression is also positively regulated by mpkB (PubMed:18378656). Expression is also positively regulated by mtfA (PubMed:24066102).</text>
</comment>
<comment type="disruption phenotype">
    <text evidence="5">Impairs the production of terrequinone A (PubMed:18029206).</text>
</comment>
<comment type="similarity">
    <text evidence="12">Belongs to the tryptophan dimethylallyltransferase family.</text>
</comment>
<organism>
    <name type="scientific">Emericella nidulans (strain FGSC A4 / ATCC 38163 / CBS 112.46 / NRRL 194 / M139)</name>
    <name type="common">Aspergillus nidulans</name>
    <dbReference type="NCBI Taxonomy" id="227321"/>
    <lineage>
        <taxon>Eukaryota</taxon>
        <taxon>Fungi</taxon>
        <taxon>Dikarya</taxon>
        <taxon>Ascomycota</taxon>
        <taxon>Pezizomycotina</taxon>
        <taxon>Eurotiomycetes</taxon>
        <taxon>Eurotiomycetidae</taxon>
        <taxon>Eurotiales</taxon>
        <taxon>Aspergillaceae</taxon>
        <taxon>Aspergillus</taxon>
        <taxon>Aspergillus subgen. Nidulantes</taxon>
    </lineage>
</organism>
<name>TDIB_EMENI</name>
<gene>
    <name evidence="10" type="primary">tdiB</name>
    <name type="ORF">AN8514</name>
</gene>
<reference key="1">
    <citation type="journal article" date="2007" name="Nat. Chem. Biol.">
        <title>Terrequinone A biosynthesis through L-tryptophan oxidation, dimerization and bisprenylation.</title>
        <authorList>
            <person name="Balibar C.J."/>
            <person name="Howard-Jones A.R."/>
            <person name="Walsh C.T."/>
        </authorList>
    </citation>
    <scope>NUCLEOTIDE SEQUENCE [MRNA]</scope>
    <source>
        <strain>FGSC A4 / ATCC 38163 / CBS 112.46 / NRRL 194 / M139</strain>
    </source>
</reference>
<reference key="2">
    <citation type="journal article" date="2005" name="Nature">
        <title>Sequencing of Aspergillus nidulans and comparative analysis with A. fumigatus and A. oryzae.</title>
        <authorList>
            <person name="Galagan J.E."/>
            <person name="Calvo S.E."/>
            <person name="Cuomo C."/>
            <person name="Ma L.-J."/>
            <person name="Wortman J.R."/>
            <person name="Batzoglou S."/>
            <person name="Lee S.-I."/>
            <person name="Bastuerkmen M."/>
            <person name="Spevak C.C."/>
            <person name="Clutterbuck J."/>
            <person name="Kapitonov V."/>
            <person name="Jurka J."/>
            <person name="Scazzocchio C."/>
            <person name="Farman M.L."/>
            <person name="Butler J."/>
            <person name="Purcell S."/>
            <person name="Harris S."/>
            <person name="Braus G.H."/>
            <person name="Draht O."/>
            <person name="Busch S."/>
            <person name="D'Enfert C."/>
            <person name="Bouchier C."/>
            <person name="Goldman G.H."/>
            <person name="Bell-Pedersen D."/>
            <person name="Griffiths-Jones S."/>
            <person name="Doonan J.H."/>
            <person name="Yu J."/>
            <person name="Vienken K."/>
            <person name="Pain A."/>
            <person name="Freitag M."/>
            <person name="Selker E.U."/>
            <person name="Archer D.B."/>
            <person name="Penalva M.A."/>
            <person name="Oakley B.R."/>
            <person name="Momany M."/>
            <person name="Tanaka T."/>
            <person name="Kumagai T."/>
            <person name="Asai K."/>
            <person name="Machida M."/>
            <person name="Nierman W.C."/>
            <person name="Denning D.W."/>
            <person name="Caddick M.X."/>
            <person name="Hynes M."/>
            <person name="Paoletti M."/>
            <person name="Fischer R."/>
            <person name="Miller B.L."/>
            <person name="Dyer P.S."/>
            <person name="Sachs M.S."/>
            <person name="Osmani S.A."/>
            <person name="Birren B.W."/>
        </authorList>
    </citation>
    <scope>NUCLEOTIDE SEQUENCE [LARGE SCALE GENOMIC DNA]</scope>
    <source>
        <strain>FGSC A4 / ATCC 38163 / CBS 112.46 / NRRL 194 / M139</strain>
    </source>
</reference>
<reference key="3">
    <citation type="journal article" date="2009" name="Fungal Genet. Biol.">
        <title>The 2008 update of the Aspergillus nidulans genome annotation: a community effort.</title>
        <authorList>
            <person name="Wortman J.R."/>
            <person name="Gilsenan J.M."/>
            <person name="Joardar V."/>
            <person name="Deegan J."/>
            <person name="Clutterbuck J."/>
            <person name="Andersen M.R."/>
            <person name="Archer D."/>
            <person name="Bencina M."/>
            <person name="Braus G."/>
            <person name="Coutinho P."/>
            <person name="von Dohren H."/>
            <person name="Doonan J."/>
            <person name="Driessen A.J."/>
            <person name="Durek P."/>
            <person name="Espeso E."/>
            <person name="Fekete E."/>
            <person name="Flipphi M."/>
            <person name="Estrada C.G."/>
            <person name="Geysens S."/>
            <person name="Goldman G."/>
            <person name="de Groot P.W."/>
            <person name="Hansen K."/>
            <person name="Harris S.D."/>
            <person name="Heinekamp T."/>
            <person name="Helmstaedt K."/>
            <person name="Henrissat B."/>
            <person name="Hofmann G."/>
            <person name="Homan T."/>
            <person name="Horio T."/>
            <person name="Horiuchi H."/>
            <person name="James S."/>
            <person name="Jones M."/>
            <person name="Karaffa L."/>
            <person name="Karanyi Z."/>
            <person name="Kato M."/>
            <person name="Keller N."/>
            <person name="Kelly D.E."/>
            <person name="Kiel J.A."/>
            <person name="Kim J.M."/>
            <person name="van der Klei I.J."/>
            <person name="Klis F.M."/>
            <person name="Kovalchuk A."/>
            <person name="Krasevec N."/>
            <person name="Kubicek C.P."/>
            <person name="Liu B."/>
            <person name="Maccabe A."/>
            <person name="Meyer V."/>
            <person name="Mirabito P."/>
            <person name="Miskei M."/>
            <person name="Mos M."/>
            <person name="Mullins J."/>
            <person name="Nelson D.R."/>
            <person name="Nielsen J."/>
            <person name="Oakley B.R."/>
            <person name="Osmani S.A."/>
            <person name="Pakula T."/>
            <person name="Paszewski A."/>
            <person name="Paulsen I."/>
            <person name="Pilsyk S."/>
            <person name="Pocsi I."/>
            <person name="Punt P.J."/>
            <person name="Ram A.F."/>
            <person name="Ren Q."/>
            <person name="Robellet X."/>
            <person name="Robson G."/>
            <person name="Seiboth B."/>
            <person name="van Solingen P."/>
            <person name="Specht T."/>
            <person name="Sun J."/>
            <person name="Taheri-Talesh N."/>
            <person name="Takeshita N."/>
            <person name="Ussery D."/>
            <person name="vanKuyk P.A."/>
            <person name="Visser H."/>
            <person name="van de Vondervoort P.J."/>
            <person name="de Vries R.P."/>
            <person name="Walton J."/>
            <person name="Xiang X."/>
            <person name="Xiong Y."/>
            <person name="Zeng A.P."/>
            <person name="Brandt B.W."/>
            <person name="Cornell M.J."/>
            <person name="van den Hondel C.A."/>
            <person name="Visser J."/>
            <person name="Oliver S.G."/>
            <person name="Turner G."/>
        </authorList>
    </citation>
    <scope>GENOME REANNOTATION</scope>
    <source>
        <strain>FGSC A4 / ATCC 38163 / CBS 112.46 / NRRL 194 / M139</strain>
    </source>
</reference>
<reference key="4">
    <citation type="journal article" date="2006" name="Chem. Biol.">
        <title>Genomic mining for Aspergillus natural products.</title>
        <authorList>
            <person name="Bok J.W."/>
            <person name="Hoffmeister D."/>
            <person name="Maggio-Hall L.A."/>
            <person name="Murillo R."/>
            <person name="Glasner J.D."/>
            <person name="Keller N.P."/>
        </authorList>
    </citation>
    <scope>IDENTIFICATION</scope>
    <scope>INDUCTION</scope>
</reference>
<reference key="5">
    <citation type="journal article" date="2007" name="Fungal Genet. Biol.">
        <title>Accurate prediction of the Aspergillus nidulans terrequinone gene cluster boundaries using the transcriptional regulator LaeA.</title>
        <authorList>
            <person name="Bouhired S."/>
            <person name="Weber M."/>
            <person name="Kempf-Sontag A."/>
            <person name="Keller N.P."/>
            <person name="Hoffmeister D."/>
        </authorList>
    </citation>
    <scope>IDENTIFICATION</scope>
    <scope>INDUCTION</scope>
    <scope>FUNCTION</scope>
</reference>
<reference key="6">
    <citation type="journal article" date="2008" name="Appl. Environ. Microbiol.">
        <title>Aspergillus nidulans natural product biosynthesis is regulated by mpkB, a putative pheromone response mitogen-activated protein kinase.</title>
        <authorList>
            <person name="Atoui A."/>
            <person name="Bao D."/>
            <person name="Kaur N."/>
            <person name="Grayburn W.S."/>
            <person name="Calvo A.M."/>
        </authorList>
    </citation>
    <scope>INDUCTION</scope>
</reference>
<reference key="7">
    <citation type="journal article" date="2008" name="Fungal Genet. Biol.">
        <title>The Aspergillus nidulans enzyme TdiB catalyzes prenyltransfer to the precursor of bioactive asterriquinones.</title>
        <authorList>
            <person name="Schneider P."/>
            <person name="Weber M."/>
            <person name="Hoffmeister D."/>
        </authorList>
    </citation>
    <scope>FUNCTION</scope>
    <scope>CATALYTIC ACTIVITY</scope>
    <scope>BIOPHYSICOCHEMICAL PROPERTIES</scope>
    <scope>DISRUPTION PHENOTYPE</scope>
</reference>
<reference key="8">
    <citation type="journal article" date="2012" name="Appl. Microbiol. Biotechnol.">
        <title>Heterologous expression system in Aspergillus oryzae for fungal biosynthetic gene clusters of secondary metabolites.</title>
        <authorList>
            <person name="Sakai K."/>
            <person name="Kinoshita H."/>
            <person name="Nihira T."/>
        </authorList>
    </citation>
    <scope>FUNCTION</scope>
</reference>
<reference key="9">
    <citation type="journal article" date="2013" name="PLoS ONE">
        <title>The putative C2H2 transcription factor MtfA is a novel regulator of secondary metabolism and morphogenesis in Aspergillus nidulans.</title>
        <authorList>
            <person name="Ramamoorthy V."/>
            <person name="Dhingra S."/>
            <person name="Kincaid A."/>
            <person name="Shantappa S."/>
            <person name="Feng X."/>
            <person name="Calvo A.M."/>
        </authorList>
    </citation>
    <scope>INDUCTION</scope>
</reference>
<reference key="10">
    <citation type="journal article" date="2016" name="Fungal Genet. Biol.">
        <title>Changes of global gene expression and secondary metabolite accumulation during light-dependent Aspergillus nidulans development.</title>
        <authorList>
            <person name="Bayram O."/>
            <person name="Feussner K."/>
            <person name="Dumkow M."/>
            <person name="Herrfurth C."/>
            <person name="Feussner I."/>
            <person name="Braus G.H."/>
        </authorList>
    </citation>
    <scope>INDUCTION</scope>
</reference>
<proteinExistence type="evidence at protein level"/>
<sequence length="419" mass="45993">MATEYWSRHLRSVLAPLFAAAGTYSPEDQESHLAFIDEHIAPNLGPLPWEPHGPYSTPSSLVGSPFDPSINIVSSGKAKVRFDFDVISPPDRTGPDPFAEGSAREILHRLADLVGADTQWMGYLMDALYLTPAEAEVAKTKLPPGVAIPPSSVGFDFDGPERTLKFYIPSVRKALATGQDVSELMLKTLRGLQPLGSELVPAMDLIASYLSTRTNDAMLPLVGIDCLDPRTHKNARVKCYLHTSSNSFAVVRDVLTLGGRLSDDTSLKRVETLKSVWPLLINELEGPQSDAATMDESWSKPERLNRTGYSGIQYTIEITPGQAIPDTKIYVPLFQYTDSSEVAERNFESALKKLGNEWGLSGKYRSVMQEIFKDVENYGQTYASFSYTEGKGVYTTSYVAMPIKDEGGGSLAGDFGFRN</sequence>
<keyword id="KW-1185">Reference proteome</keyword>
<keyword id="KW-0808">Transferase</keyword>